<proteinExistence type="evidence at protein level"/>
<reference key="1">
    <citation type="journal article" date="1986" name="Proc. Natl. Acad. Sci. U.S.A.">
        <title>Mr 26,000 antigen of Schistosoma japonicum recognized by resistant WEHI 129/J mice is a parasite glutathione S-transferase.</title>
        <authorList>
            <person name="Smith D.B."/>
            <person name="Davern K.M."/>
            <person name="Board P.G."/>
            <person name="Tiu W.U."/>
            <person name="Garcia E.G."/>
            <person name="Mitchell G.F."/>
        </authorList>
    </citation>
    <scope>NUCLEOTIDE SEQUENCE [MRNA]</scope>
</reference>
<reference key="2">
    <citation type="journal article" date="1987" name="Proc. Natl. Acad. Sci. U.S.A.">
        <authorList>
            <person name="Smith D.B."/>
            <person name="Davern K.M."/>
            <person name="Board P.G."/>
            <person name="Tiu W.U."/>
            <person name="Garcia E.G."/>
            <person name="Mitchell G.F."/>
        </authorList>
    </citation>
    <scope>SEQUENCE REVISION</scope>
</reference>
<reference key="3">
    <citation type="journal article" date="1988" name="Mol. Biochem. Parasitol.">
        <title>Expression of an enzymatically active parasite molecule in Escherichia coli: Schistosoma japonicum glutathione S-transferase.</title>
        <authorList>
            <person name="Smith D.B."/>
            <person name="Rubira M.R."/>
            <person name="Simpson R.J."/>
            <person name="Davern K.M."/>
            <person name="Tiu W.U."/>
            <person name="Board P.G."/>
            <person name="Mitchell G.F."/>
        </authorList>
    </citation>
    <scope>PROTEIN SEQUENCE OF 2-15</scope>
</reference>
<reference key="4">
    <citation type="journal article" date="1994" name="Protein Sci.">
        <title>Three-dimensional structure of Schistosoma japonicum glutathione S-transferase fused with a six-amino acid conserved neutralizing epitope of gp41 from HIV.</title>
        <authorList>
            <person name="Lim K."/>
            <person name="Ho J.X."/>
            <person name="Keeling K."/>
            <person name="Gilliland G.L."/>
            <person name="Ji X."/>
            <person name="Ruker F."/>
            <person name="Carter D.C."/>
        </authorList>
    </citation>
    <scope>X-RAY CRYSTALLOGRAPHY (2.5 ANGSTROMS) IN COMPLEX WITH GLUTATHIONE</scope>
</reference>
<reference key="5">
    <citation type="journal article" date="1995" name="J. Mol. Biol.">
        <title>Crystal structures of a schistosomal drug and vaccine target: glutathione S-transferase from Schistosoma japonica and its complex with the leading antischistosomal drug praziquantel.</title>
        <authorList>
            <person name="McTigue M.A."/>
            <person name="Williams D.R."/>
            <person name="Tainer J.A."/>
        </authorList>
    </citation>
    <scope>X-RAY CRYSTALLOGRAPHY (2.5 ANGSTROMS) IN COMPLEX WITH INHIBITOR PRAZIQUANTEL</scope>
</reference>
<reference key="6">
    <citation type="journal article" date="2003" name="Proteins">
        <title>Characterization of the electrophile binding site and substrate binding mode of the 26-kDa glutathione S-transferase from Schistosoma japonicum.</title>
        <authorList>
            <person name="Cardoso R.M."/>
            <person name="Daniels D.S."/>
            <person name="Bruns C.M."/>
            <person name="Tainer J.A."/>
        </authorList>
    </citation>
    <scope>X-RAY CRYSTALLOGRAPHY (2.1 ANGSTROMS) IN COMPLEXES WITH GLUTATHIONE ANALOGS</scope>
</reference>
<reference key="7">
    <citation type="journal article" date="2009" name="Protein Sci.">
        <title>Using affinity chromatography to engineer and characterize pH-dependent protein switches.</title>
        <authorList>
            <person name="Sagermann M."/>
            <person name="Chapleau R.R."/>
            <person name="DeLorimier E."/>
            <person name="Lei M."/>
        </authorList>
    </citation>
    <scope>X-RAY CRYSTALLOGRAPHY (1.9 ANGSTROMS) OF 1-214</scope>
</reference>
<sequence>MSPILGYWKIKGLVQPTRLLLEYLEEKYEEHLYERDEGDKWRNKKFELGLEFPNLPYYIDGDVKLTQSMAIIRYIADKHNMLGGCPKERAEISMLEGAVLDIRYGVSRIAYSKDFETLKVDFLSKLPEMLKMFEDRLCHKTYLNGDHVTHPDFMLYDALDVVLYMDPMCLDAFPKLVCFKKRIEAIPQIDKYLKSSKYIAWPLQGWQATFGGGDHPPK</sequence>
<protein>
    <recommendedName>
        <fullName>Glutathione S-transferase class-mu 26 kDa isozyme</fullName>
        <shortName>GST 26</shortName>
        <ecNumber>2.5.1.18</ecNumber>
    </recommendedName>
    <alternativeName>
        <fullName>Sj26 antigen</fullName>
    </alternativeName>
    <alternativeName>
        <fullName>SjGST</fullName>
    </alternativeName>
</protein>
<dbReference type="EC" id="2.5.1.18"/>
<dbReference type="EMBL" id="M14654">
    <property type="protein sequence ID" value="AAB59203.1"/>
    <property type="molecule type" value="mRNA"/>
</dbReference>
<dbReference type="PIR" id="A61514">
    <property type="entry name" value="A61514"/>
</dbReference>
<dbReference type="PDB" id="1B8X">
    <property type="method" value="X-ray"/>
    <property type="resolution" value="2.70 A"/>
    <property type="chains" value="A=2-218"/>
</dbReference>
<dbReference type="PDB" id="1BG5">
    <property type="method" value="X-ray"/>
    <property type="resolution" value="2.60 A"/>
    <property type="chains" value="A=1-218"/>
</dbReference>
<dbReference type="PDB" id="1DUG">
    <property type="method" value="X-ray"/>
    <property type="resolution" value="1.80 A"/>
    <property type="chains" value="A/B=2-218"/>
</dbReference>
<dbReference type="PDB" id="1GNE">
    <property type="method" value="X-ray"/>
    <property type="resolution" value="2.50 A"/>
    <property type="chains" value="A=2-218"/>
</dbReference>
<dbReference type="PDB" id="1GTA">
    <property type="method" value="X-ray"/>
    <property type="resolution" value="2.40 A"/>
    <property type="chains" value="A=1-218"/>
</dbReference>
<dbReference type="PDB" id="1GTB">
    <property type="method" value="X-ray"/>
    <property type="resolution" value="2.60 A"/>
    <property type="chains" value="A=1-218"/>
</dbReference>
<dbReference type="PDB" id="1M99">
    <property type="method" value="X-ray"/>
    <property type="resolution" value="2.30 A"/>
    <property type="chains" value="A=1-218"/>
</dbReference>
<dbReference type="PDB" id="1M9A">
    <property type="method" value="X-ray"/>
    <property type="resolution" value="2.10 A"/>
    <property type="chains" value="A=1-218"/>
</dbReference>
<dbReference type="PDB" id="1M9B">
    <property type="method" value="X-ray"/>
    <property type="resolution" value="2.60 A"/>
    <property type="chains" value="A=1-218"/>
</dbReference>
<dbReference type="PDB" id="1U87">
    <property type="method" value="X-ray"/>
    <property type="resolution" value="3.50 A"/>
    <property type="chains" value="A=1-218"/>
</dbReference>
<dbReference type="PDB" id="1U88">
    <property type="method" value="X-ray"/>
    <property type="resolution" value="3.50 A"/>
    <property type="chains" value="A/B=1-218"/>
</dbReference>
<dbReference type="PDB" id="1UA5">
    <property type="method" value="X-ray"/>
    <property type="resolution" value="2.50 A"/>
    <property type="chains" value="A=1-218"/>
</dbReference>
<dbReference type="PDB" id="1Y6E">
    <property type="method" value="X-ray"/>
    <property type="resolution" value="3.00 A"/>
    <property type="chains" value="A/B=2-218"/>
</dbReference>
<dbReference type="PDB" id="3CRT">
    <property type="method" value="X-ray"/>
    <property type="resolution" value="1.90 A"/>
    <property type="chains" value="A=1-214"/>
</dbReference>
<dbReference type="PDB" id="3CRU">
    <property type="method" value="X-ray"/>
    <property type="resolution" value="2.30 A"/>
    <property type="chains" value="A=1-214"/>
</dbReference>
<dbReference type="PDB" id="3D0Z">
    <property type="method" value="X-ray"/>
    <property type="resolution" value="2.50 A"/>
    <property type="chains" value="A=1-214"/>
</dbReference>
<dbReference type="PDB" id="3QMZ">
    <property type="method" value="X-ray"/>
    <property type="resolution" value="6.00 A"/>
    <property type="chains" value="S/T=2-218"/>
</dbReference>
<dbReference type="PDB" id="4AI6">
    <property type="method" value="X-ray"/>
    <property type="resolution" value="3.40 A"/>
    <property type="chains" value="A/B=2-218"/>
</dbReference>
<dbReference type="PDB" id="4AKG">
    <property type="method" value="X-ray"/>
    <property type="resolution" value="3.30 A"/>
    <property type="chains" value="A/B=2-218"/>
</dbReference>
<dbReference type="PDB" id="4AKH">
    <property type="method" value="X-ray"/>
    <property type="resolution" value="3.60 A"/>
    <property type="chains" value="A/B=2-218"/>
</dbReference>
<dbReference type="PDB" id="4AKI">
    <property type="method" value="X-ray"/>
    <property type="resolution" value="3.70 A"/>
    <property type="chains" value="A/B=2-218"/>
</dbReference>
<dbReference type="PDB" id="4ECB">
    <property type="method" value="X-ray"/>
    <property type="resolution" value="2.20 A"/>
    <property type="chains" value="A/B=1-218"/>
</dbReference>
<dbReference type="PDB" id="4ECC">
    <property type="method" value="X-ray"/>
    <property type="resolution" value="2.20 A"/>
    <property type="chains" value="A=1-215"/>
</dbReference>
<dbReference type="PDB" id="4WR4">
    <property type="method" value="X-ray"/>
    <property type="resolution" value="1.60 A"/>
    <property type="chains" value="A=2-218"/>
</dbReference>
<dbReference type="PDB" id="4WR5">
    <property type="method" value="X-ray"/>
    <property type="resolution" value="1.93 A"/>
    <property type="chains" value="A=2-218"/>
</dbReference>
<dbReference type="PDB" id="5GZZ">
    <property type="method" value="X-ray"/>
    <property type="resolution" value="2.39 A"/>
    <property type="chains" value="B/C/D/E/F/G=1-218"/>
</dbReference>
<dbReference type="PDB" id="6JI6">
    <property type="method" value="X-ray"/>
    <property type="resolution" value="1.50 A"/>
    <property type="chains" value="A=1-218"/>
</dbReference>
<dbReference type="PDB" id="6N8U">
    <property type="method" value="X-ray"/>
    <property type="resolution" value="1.96 A"/>
    <property type="chains" value="A/B=1-218"/>
</dbReference>
<dbReference type="PDB" id="6RWD">
    <property type="method" value="X-ray"/>
    <property type="resolution" value="1.53 A"/>
    <property type="chains" value="A/B=1-218"/>
</dbReference>
<dbReference type="PDB" id="7AL7">
    <property type="method" value="X-ray"/>
    <property type="resolution" value="1.80 A"/>
    <property type="chains" value="B=2-218"/>
</dbReference>
<dbReference type="PDB" id="7ESG">
    <property type="method" value="X-ray"/>
    <property type="resolution" value="2.53 A"/>
    <property type="chains" value="A=1-218"/>
</dbReference>
<dbReference type="PDB" id="7NT8">
    <property type="method" value="X-ray"/>
    <property type="resolution" value="2.22 A"/>
    <property type="chains" value="A/B=1-218"/>
</dbReference>
<dbReference type="PDB" id="7XQK">
    <property type="method" value="X-ray"/>
    <property type="resolution" value="2.25 A"/>
    <property type="chains" value="A=1-218"/>
</dbReference>
<dbReference type="PDB" id="8DHB">
    <property type="method" value="EM"/>
    <property type="resolution" value="3.53 A"/>
    <property type="chains" value="H=2-218"/>
</dbReference>
<dbReference type="PDB" id="8FW5">
    <property type="method" value="EM"/>
    <property type="resolution" value="3.08 A"/>
    <property type="chains" value="F=1-218"/>
</dbReference>
<dbReference type="PDB" id="8GYD">
    <property type="method" value="X-ray"/>
    <property type="resolution" value="1.70 A"/>
    <property type="chains" value="A/B=1-218"/>
</dbReference>
<dbReference type="PDB" id="8H4R">
    <property type="method" value="X-ray"/>
    <property type="resolution" value="2.75 A"/>
    <property type="chains" value="A=1-218"/>
</dbReference>
<dbReference type="PDB" id="8JHU">
    <property type="method" value="EM"/>
    <property type="resolution" value="3.10 A"/>
    <property type="chains" value="A=1-218"/>
</dbReference>
<dbReference type="PDB" id="8OK1">
    <property type="method" value="X-ray"/>
    <property type="resolution" value="1.38 A"/>
    <property type="chains" value="A=1-218"/>
</dbReference>
<dbReference type="PDB" id="8OKF">
    <property type="method" value="X-ray"/>
    <property type="resolution" value="1.85 A"/>
    <property type="chains" value="A=1-218"/>
</dbReference>
<dbReference type="PDB" id="8RDY">
    <property type="method" value="EM"/>
    <property type="resolution" value="3.33 A"/>
    <property type="chains" value="B=1-218"/>
</dbReference>
<dbReference type="PDB" id="8SEN">
    <property type="method" value="EM"/>
    <property type="resolution" value="3.49 A"/>
    <property type="chains" value="E/F/G/H=1-218"/>
</dbReference>
<dbReference type="PDB" id="8SEO">
    <property type="method" value="EM"/>
    <property type="resolution" value="3.92 A"/>
    <property type="chains" value="E/F/G/H=1-218"/>
</dbReference>
<dbReference type="PDB" id="8SEP">
    <property type="method" value="EM"/>
    <property type="resolution" value="3.57 A"/>
    <property type="chains" value="E/F/G/H=1-218"/>
</dbReference>
<dbReference type="PDB" id="8SEQ">
    <property type="method" value="EM"/>
    <property type="resolution" value="3.40 A"/>
    <property type="chains" value="E/F/G/H=1-218"/>
</dbReference>
<dbReference type="PDB" id="8SER">
    <property type="method" value="EM"/>
    <property type="resolution" value="3.42 A"/>
    <property type="chains" value="E/F/G/H=1-218"/>
</dbReference>
<dbReference type="PDB" id="8SES">
    <property type="method" value="EM"/>
    <property type="resolution" value="3.98 A"/>
    <property type="chains" value="E/F/G/H=1-218"/>
</dbReference>
<dbReference type="PDB" id="8SET">
    <property type="method" value="EM"/>
    <property type="resolution" value="3.42 A"/>
    <property type="chains" value="E/F/G/H=1-218"/>
</dbReference>
<dbReference type="PDB" id="9AXA">
    <property type="method" value="EM"/>
    <property type="resolution" value="4.36 A"/>
    <property type="chains" value="A/C=1-218"/>
</dbReference>
<dbReference type="PDB" id="9AXC">
    <property type="method" value="EM"/>
    <property type="resolution" value="4.16 A"/>
    <property type="chains" value="A/C=1-218"/>
</dbReference>
<dbReference type="PDB" id="9F1B">
    <property type="method" value="EM"/>
    <property type="resolution" value="3.01 A"/>
    <property type="chains" value="DA=1-218"/>
</dbReference>
<dbReference type="PDB" id="9F1C">
    <property type="method" value="EM"/>
    <property type="resolution" value="3.78 A"/>
    <property type="chains" value="DA=1-218"/>
</dbReference>
<dbReference type="PDB" id="9F1D">
    <property type="method" value="EM"/>
    <property type="resolution" value="3.26 A"/>
    <property type="chains" value="DA=1-218"/>
</dbReference>
<dbReference type="PDBsum" id="1B8X"/>
<dbReference type="PDBsum" id="1BG5"/>
<dbReference type="PDBsum" id="1DUG"/>
<dbReference type="PDBsum" id="1GNE"/>
<dbReference type="PDBsum" id="1GTA"/>
<dbReference type="PDBsum" id="1GTB"/>
<dbReference type="PDBsum" id="1M99"/>
<dbReference type="PDBsum" id="1M9A"/>
<dbReference type="PDBsum" id="1M9B"/>
<dbReference type="PDBsum" id="1U87"/>
<dbReference type="PDBsum" id="1U88"/>
<dbReference type="PDBsum" id="1UA5"/>
<dbReference type="PDBsum" id="1Y6E"/>
<dbReference type="PDBsum" id="3CRT"/>
<dbReference type="PDBsum" id="3CRU"/>
<dbReference type="PDBsum" id="3D0Z"/>
<dbReference type="PDBsum" id="3QMZ"/>
<dbReference type="PDBsum" id="4AI6"/>
<dbReference type="PDBsum" id="4AKG"/>
<dbReference type="PDBsum" id="4AKH"/>
<dbReference type="PDBsum" id="4AKI"/>
<dbReference type="PDBsum" id="4ECB"/>
<dbReference type="PDBsum" id="4ECC"/>
<dbReference type="PDBsum" id="4WR4"/>
<dbReference type="PDBsum" id="4WR5"/>
<dbReference type="PDBsum" id="5GZZ"/>
<dbReference type="PDBsum" id="6JI6"/>
<dbReference type="PDBsum" id="6N8U"/>
<dbReference type="PDBsum" id="6RWD"/>
<dbReference type="PDBsum" id="7AL7"/>
<dbReference type="PDBsum" id="7ESG"/>
<dbReference type="PDBsum" id="7NT8"/>
<dbReference type="PDBsum" id="7XQK"/>
<dbReference type="PDBsum" id="8DHB"/>
<dbReference type="PDBsum" id="8FW5"/>
<dbReference type="PDBsum" id="8GYD"/>
<dbReference type="PDBsum" id="8H4R"/>
<dbReference type="PDBsum" id="8JHU"/>
<dbReference type="PDBsum" id="8OK1"/>
<dbReference type="PDBsum" id="8OKF"/>
<dbReference type="PDBsum" id="8RDY"/>
<dbReference type="PDBsum" id="8SEN"/>
<dbReference type="PDBsum" id="8SEO"/>
<dbReference type="PDBsum" id="8SEP"/>
<dbReference type="PDBsum" id="8SEQ"/>
<dbReference type="PDBsum" id="8SER"/>
<dbReference type="PDBsum" id="8SES"/>
<dbReference type="PDBsum" id="8SET"/>
<dbReference type="PDBsum" id="9AXA"/>
<dbReference type="PDBsum" id="9AXC"/>
<dbReference type="PDBsum" id="9F1B"/>
<dbReference type="PDBsum" id="9F1C"/>
<dbReference type="PDBsum" id="9F1D"/>
<dbReference type="SASBDB" id="P08515"/>
<dbReference type="SMR" id="P08515"/>
<dbReference type="DrugCentral" id="P08515"/>
<dbReference type="ABCD" id="P08515">
    <property type="antibodies" value="23 sequenced antibodies"/>
</dbReference>
<dbReference type="BRENDA" id="2.5.1.18">
    <property type="organism ID" value="5607"/>
</dbReference>
<dbReference type="SABIO-RK" id="P08515"/>
<dbReference type="EvolutionaryTrace" id="P08515"/>
<dbReference type="GO" id="GO:0004364">
    <property type="term" value="F:glutathione transferase activity"/>
    <property type="evidence" value="ECO:0007669"/>
    <property type="project" value="UniProtKB-EC"/>
</dbReference>
<dbReference type="GO" id="GO:0006749">
    <property type="term" value="P:glutathione metabolic process"/>
    <property type="evidence" value="ECO:0007669"/>
    <property type="project" value="TreeGrafter"/>
</dbReference>
<dbReference type="CDD" id="cd03209">
    <property type="entry name" value="GST_C_Mu"/>
    <property type="match status" value="1"/>
</dbReference>
<dbReference type="CDD" id="cd03075">
    <property type="entry name" value="GST_N_Mu"/>
    <property type="match status" value="1"/>
</dbReference>
<dbReference type="FunFam" id="1.20.1050.10:FF:000003">
    <property type="entry name" value="Glutathione S-transferase 2"/>
    <property type="match status" value="1"/>
</dbReference>
<dbReference type="Gene3D" id="1.20.1050.130">
    <property type="match status" value="1"/>
</dbReference>
<dbReference type="InterPro" id="IPR010987">
    <property type="entry name" value="Glutathione-S-Trfase_C-like"/>
</dbReference>
<dbReference type="InterPro" id="IPR036282">
    <property type="entry name" value="Glutathione-S-Trfase_C_sf"/>
</dbReference>
<dbReference type="InterPro" id="IPR040079">
    <property type="entry name" value="Glutathione_S-Trfase"/>
</dbReference>
<dbReference type="InterPro" id="IPR004045">
    <property type="entry name" value="Glutathione_S-Trfase_N"/>
</dbReference>
<dbReference type="InterPro" id="IPR004046">
    <property type="entry name" value="GST_C"/>
</dbReference>
<dbReference type="InterPro" id="IPR050213">
    <property type="entry name" value="GST_superfamily"/>
</dbReference>
<dbReference type="InterPro" id="IPR036249">
    <property type="entry name" value="Thioredoxin-like_sf"/>
</dbReference>
<dbReference type="PANTHER" id="PTHR11571">
    <property type="entry name" value="GLUTATHIONE S-TRANSFERASE"/>
    <property type="match status" value="1"/>
</dbReference>
<dbReference type="PANTHER" id="PTHR11571:SF222">
    <property type="entry name" value="GLUTATHIONE TRANSFERASE"/>
    <property type="match status" value="1"/>
</dbReference>
<dbReference type="Pfam" id="PF14497">
    <property type="entry name" value="GST_C_3"/>
    <property type="match status" value="1"/>
</dbReference>
<dbReference type="Pfam" id="PF02798">
    <property type="entry name" value="GST_N"/>
    <property type="match status" value="1"/>
</dbReference>
<dbReference type="SFLD" id="SFLDG01205">
    <property type="entry name" value="AMPS.1"/>
    <property type="match status" value="1"/>
</dbReference>
<dbReference type="SFLD" id="SFLDS00019">
    <property type="entry name" value="Glutathione_Transferase_(cytos"/>
    <property type="match status" value="1"/>
</dbReference>
<dbReference type="SUPFAM" id="SSF47616">
    <property type="entry name" value="GST C-terminal domain-like"/>
    <property type="match status" value="1"/>
</dbReference>
<dbReference type="SUPFAM" id="SSF52833">
    <property type="entry name" value="Thioredoxin-like"/>
    <property type="match status" value="1"/>
</dbReference>
<dbReference type="PROSITE" id="PS50405">
    <property type="entry name" value="GST_CTER"/>
    <property type="match status" value="1"/>
</dbReference>
<dbReference type="PROSITE" id="PS50404">
    <property type="entry name" value="GST_NTER"/>
    <property type="match status" value="1"/>
</dbReference>
<keyword id="KW-0002">3D-structure</keyword>
<keyword id="KW-0903">Direct protein sequencing</keyword>
<keyword id="KW-0808">Transferase</keyword>
<comment type="function">
    <text>Conjugation of reduced glutathione to a wide number of exogenous and endogenous hydrophobic electrophiles.</text>
</comment>
<comment type="function">
    <text>GST isoenzymes appear to play a central role in the parasite detoxification system. Other functions are also suspected including a role in increasing the solubility of haematin in the parasite gut.</text>
</comment>
<comment type="catalytic activity">
    <reaction>
        <text>RX + glutathione = an S-substituted glutathione + a halide anion + H(+)</text>
        <dbReference type="Rhea" id="RHEA:16437"/>
        <dbReference type="ChEBI" id="CHEBI:15378"/>
        <dbReference type="ChEBI" id="CHEBI:16042"/>
        <dbReference type="ChEBI" id="CHEBI:17792"/>
        <dbReference type="ChEBI" id="CHEBI:57925"/>
        <dbReference type="ChEBI" id="CHEBI:90779"/>
        <dbReference type="EC" id="2.5.1.18"/>
    </reaction>
</comment>
<comment type="subunit">
    <text evidence="3">Homodimer.</text>
</comment>
<comment type="miscellaneous">
    <text>There are at least two isoenzymes of GST in S.japonicum.</text>
</comment>
<comment type="similarity">
    <text evidence="4">Belongs to the GST superfamily. Mu family.</text>
</comment>
<organism>
    <name type="scientific">Schistosoma japonicum</name>
    <name type="common">Blood fluke</name>
    <dbReference type="NCBI Taxonomy" id="6182"/>
    <lineage>
        <taxon>Eukaryota</taxon>
        <taxon>Metazoa</taxon>
        <taxon>Spiralia</taxon>
        <taxon>Lophotrochozoa</taxon>
        <taxon>Platyhelminthes</taxon>
        <taxon>Trematoda</taxon>
        <taxon>Digenea</taxon>
        <taxon>Strigeidida</taxon>
        <taxon>Schistosomatoidea</taxon>
        <taxon>Schistosomatidae</taxon>
        <taxon>Schistosoma</taxon>
    </lineage>
</organism>
<feature type="initiator methionine" description="Removed" evidence="1">
    <location>
        <position position="1"/>
    </location>
</feature>
<feature type="chain" id="PRO_0000185805" description="Glutathione S-transferase class-mu 26 kDa isozyme">
    <location>
        <begin position="2"/>
        <end position="218"/>
    </location>
</feature>
<feature type="domain" description="GST N-terminal">
    <location>
        <begin position="2"/>
        <end position="83"/>
    </location>
</feature>
<feature type="domain" description="GST C-terminal">
    <location>
        <begin position="85"/>
        <end position="203"/>
    </location>
</feature>
<feature type="binding site" evidence="2 5">
    <location>
        <begin position="7"/>
        <end position="8"/>
    </location>
    <ligand>
        <name>glutathione</name>
        <dbReference type="ChEBI" id="CHEBI:57925"/>
    </ligand>
</feature>
<feature type="binding site" evidence="2 5">
    <location>
        <begin position="41"/>
        <end position="45"/>
    </location>
    <ligand>
        <name>glutathione</name>
        <dbReference type="ChEBI" id="CHEBI:57925"/>
    </ligand>
</feature>
<feature type="binding site" evidence="2 5">
    <location>
        <begin position="54"/>
        <end position="55"/>
    </location>
    <ligand>
        <name>glutathione</name>
        <dbReference type="ChEBI" id="CHEBI:57925"/>
    </ligand>
</feature>
<feature type="binding site" evidence="2 5">
    <location>
        <begin position="67"/>
        <end position="68"/>
    </location>
    <ligand>
        <name>glutathione</name>
        <dbReference type="ChEBI" id="CHEBI:57925"/>
    </ligand>
</feature>
<feature type="binding site" evidence="4">
    <location>
        <position position="111"/>
    </location>
    <ligand>
        <name>substrate</name>
    </ligand>
</feature>
<feature type="strand" evidence="9">
    <location>
        <begin position="4"/>
        <end position="11"/>
    </location>
</feature>
<feature type="helix" evidence="9">
    <location>
        <begin position="12"/>
        <end position="14"/>
    </location>
</feature>
<feature type="helix" evidence="9">
    <location>
        <begin position="15"/>
        <end position="23"/>
    </location>
</feature>
<feature type="helix" evidence="12">
    <location>
        <begin position="25"/>
        <end position="28"/>
    </location>
</feature>
<feature type="strand" evidence="9">
    <location>
        <begin position="29"/>
        <end position="33"/>
    </location>
</feature>
<feature type="helix" evidence="10">
    <location>
        <begin position="35"/>
        <end position="37"/>
    </location>
</feature>
<feature type="helix" evidence="9">
    <location>
        <begin position="38"/>
        <end position="44"/>
    </location>
</feature>
<feature type="helix" evidence="8">
    <location>
        <begin position="45"/>
        <end position="47"/>
    </location>
</feature>
<feature type="strand" evidence="9">
    <location>
        <begin position="55"/>
        <end position="60"/>
    </location>
</feature>
<feature type="strand" evidence="9">
    <location>
        <begin position="63"/>
        <end position="66"/>
    </location>
</feature>
<feature type="helix" evidence="9">
    <location>
        <begin position="68"/>
        <end position="78"/>
    </location>
</feature>
<feature type="strand" evidence="12">
    <location>
        <begin position="81"/>
        <end position="84"/>
    </location>
</feature>
<feature type="helix" evidence="9">
    <location>
        <begin position="86"/>
        <end position="110"/>
    </location>
</feature>
<feature type="strand" evidence="7">
    <location>
        <begin position="111"/>
        <end position="113"/>
    </location>
</feature>
<feature type="helix" evidence="9">
    <location>
        <begin position="115"/>
        <end position="136"/>
    </location>
</feature>
<feature type="turn" evidence="9">
    <location>
        <begin position="137"/>
        <end position="139"/>
    </location>
</feature>
<feature type="helix" evidence="12">
    <location>
        <begin position="140"/>
        <end position="143"/>
    </location>
</feature>
<feature type="strand" evidence="9">
    <location>
        <begin position="145"/>
        <end position="147"/>
    </location>
</feature>
<feature type="helix" evidence="9">
    <location>
        <begin position="150"/>
        <end position="165"/>
    </location>
</feature>
<feature type="turn" evidence="9">
    <location>
        <begin position="167"/>
        <end position="172"/>
    </location>
</feature>
<feature type="helix" evidence="9">
    <location>
        <begin position="174"/>
        <end position="185"/>
    </location>
</feature>
<feature type="helix" evidence="9">
    <location>
        <begin position="187"/>
        <end position="194"/>
    </location>
</feature>
<feature type="strand" evidence="6">
    <location>
        <begin position="195"/>
        <end position="197"/>
    </location>
</feature>
<feature type="helix" evidence="12">
    <location>
        <begin position="200"/>
        <end position="203"/>
    </location>
</feature>
<feature type="strand" evidence="9">
    <location>
        <begin position="209"/>
        <end position="211"/>
    </location>
</feature>
<feature type="strand" evidence="11">
    <location>
        <begin position="213"/>
        <end position="215"/>
    </location>
</feature>
<accession>P08515</accession>
<evidence type="ECO:0000269" key="1">
    <source>
    </source>
</evidence>
<evidence type="ECO:0000269" key="2">
    <source>
    </source>
</evidence>
<evidence type="ECO:0000269" key="3">
    <source>
    </source>
</evidence>
<evidence type="ECO:0000305" key="4"/>
<evidence type="ECO:0000305" key="5">
    <source>
    </source>
</evidence>
<evidence type="ECO:0007829" key="6">
    <source>
        <dbReference type="PDB" id="1GTA"/>
    </source>
</evidence>
<evidence type="ECO:0007829" key="7">
    <source>
        <dbReference type="PDB" id="4AKG"/>
    </source>
</evidence>
<evidence type="ECO:0007829" key="8">
    <source>
        <dbReference type="PDB" id="4WR5"/>
    </source>
</evidence>
<evidence type="ECO:0007829" key="9">
    <source>
        <dbReference type="PDB" id="6JI6"/>
    </source>
</evidence>
<evidence type="ECO:0007829" key="10">
    <source>
        <dbReference type="PDB" id="6N8U"/>
    </source>
</evidence>
<evidence type="ECO:0007829" key="11">
    <source>
        <dbReference type="PDB" id="6RWD"/>
    </source>
</evidence>
<evidence type="ECO:0007829" key="12">
    <source>
        <dbReference type="PDB" id="7ESG"/>
    </source>
</evidence>
<name>GST26_SCHJA</name>